<organism>
    <name type="scientific">Saccharomyces cerevisiae (strain ATCC 204508 / S288c)</name>
    <name type="common">Baker's yeast</name>
    <dbReference type="NCBI Taxonomy" id="559292"/>
    <lineage>
        <taxon>Eukaryota</taxon>
        <taxon>Fungi</taxon>
        <taxon>Dikarya</taxon>
        <taxon>Ascomycota</taxon>
        <taxon>Saccharomycotina</taxon>
        <taxon>Saccharomycetes</taxon>
        <taxon>Saccharomycetales</taxon>
        <taxon>Saccharomycetaceae</taxon>
        <taxon>Saccharomyces</taxon>
    </lineage>
</organism>
<proteinExistence type="evidence at protein level"/>
<feature type="chain" id="PRO_0000071395" description="5'-3' exoribonuclease 1">
    <location>
        <begin position="1"/>
        <end position="1528"/>
    </location>
</feature>
<feature type="region of interest" description="Disordered" evidence="1">
    <location>
        <begin position="1246"/>
        <end position="1331"/>
    </location>
</feature>
<feature type="region of interest" description="Disordered" evidence="1">
    <location>
        <begin position="1431"/>
        <end position="1455"/>
    </location>
</feature>
<feature type="region of interest" description="Disordered" evidence="1">
    <location>
        <begin position="1470"/>
        <end position="1528"/>
    </location>
</feature>
<feature type="compositionally biased region" description="Basic and acidic residues" evidence="1">
    <location>
        <begin position="1274"/>
        <end position="1304"/>
    </location>
</feature>
<feature type="compositionally biased region" description="Basic residues" evidence="1">
    <location>
        <begin position="1317"/>
        <end position="1326"/>
    </location>
</feature>
<feature type="compositionally biased region" description="Polar residues" evidence="1">
    <location>
        <begin position="1500"/>
        <end position="1517"/>
    </location>
</feature>
<feature type="compositionally biased region" description="Basic and acidic residues" evidence="1">
    <location>
        <begin position="1518"/>
        <end position="1528"/>
    </location>
</feature>
<feature type="modified residue" description="Phosphothreonine" evidence="45">
    <location>
        <position position="1506"/>
    </location>
</feature>
<feature type="modified residue" description="Phosphoserine" evidence="43 44 45">
    <location>
        <position position="1510"/>
    </location>
</feature>
<feature type="mutagenesis site" description="Strongly reduces exonuclease activity." evidence="40">
    <original>N</original>
    <variation>D</variation>
    <location>
        <position position="37"/>
    </location>
</feature>
<feature type="mutagenesis site" description="Strongly reduces exonuclease activity." evidence="40">
    <original>H</original>
    <variation>R</variation>
    <variation>D</variation>
    <location>
        <position position="41"/>
    </location>
</feature>
<feature type="mutagenesis site" description="Strongly reduces exonuclease activity." evidence="40">
    <original>D</original>
    <variation>G</variation>
    <location>
        <position position="86"/>
    </location>
</feature>
<feature type="mutagenesis site" description="Strongly reduces exonuclease activity." evidence="40">
    <original>G</original>
    <variation>D</variation>
    <location>
        <position position="87"/>
    </location>
</feature>
<feature type="mutagenesis site" description="Strongly reduces exonuclease activity." evidence="40">
    <original>K</original>
    <variation>M</variation>
    <location>
        <position position="93"/>
    </location>
</feature>
<feature type="mutagenesis site" description="Strongly reduces exonuclease activity." evidence="40">
    <original>Q</original>
    <variation>E</variation>
    <variation>R</variation>
    <location>
        <position position="97"/>
    </location>
</feature>
<feature type="mutagenesis site" description="Strongly reduces exonuclease activity." evidence="40">
    <original>R</original>
    <variation>G</variation>
    <location>
        <position position="101"/>
    </location>
</feature>
<feature type="mutagenesis site" description="Strongly reduces exonuclease activity.">
    <original>E</original>
    <variation>G</variation>
    <location>
        <position position="176"/>
    </location>
</feature>
<feature type="mutagenesis site" description="Strongly reduces exonuclease activity." evidence="40">
    <original>E</original>
    <variation>D</variation>
    <variation>G</variation>
    <location>
        <position position="178"/>
    </location>
</feature>
<feature type="mutagenesis site" description="Strongly reduces exonuclease activity." evidence="40">
    <original>C</original>
    <variation>Y</variation>
    <variation>R</variation>
    <location>
        <position position="201"/>
    </location>
</feature>
<feature type="mutagenesis site" description="Abolishes exonuclease activity in vitro." evidence="2">
    <original>D</original>
    <variation>A</variation>
    <location>
        <position position="206"/>
    </location>
</feature>
<feature type="mutagenesis site" description="Abolishes exonuclease activity in vitro." evidence="2">
    <original>D</original>
    <variation>A</variation>
    <location>
        <position position="208"/>
    </location>
</feature>
<feature type="mutagenesis site" description="Strongly reduces exonuclease activity; when associated with Y-710." evidence="40">
    <original>L</original>
    <variation>P</variation>
    <location>
        <position position="592"/>
    </location>
</feature>
<feature type="mutagenesis site" description="Strongly reduces exonuclease activity; when associated with P-592." evidence="40">
    <original>Y</original>
    <variation>C</variation>
    <location>
        <position position="710"/>
    </location>
</feature>
<feature type="mutagenesis site" description="Strongly reduces exonuclease activity; when associated with D-1024; F-1043 and P-1197." evidence="40">
    <original>W</original>
    <variation>R</variation>
    <location>
        <position position="798"/>
    </location>
</feature>
<feature type="mutagenesis site" description="Strongly reduces exonuclease activity; when associated with R-798; F-1043 and P-1197." evidence="40">
    <original>E</original>
    <variation>D</variation>
    <location>
        <position position="1024"/>
    </location>
</feature>
<feature type="mutagenesis site" description="Strongly reduces exonuclease activity; when associated with R-798; D-1024 and P-1197." evidence="40">
    <original>Y</original>
    <variation>F</variation>
    <location>
        <position position="1043"/>
    </location>
</feature>
<feature type="mutagenesis site" description="Strongly reduces exonuclease activity; when associated with R-798; D-1024 and F-1043." evidence="40">
    <original>S</original>
    <variation>P</variation>
    <location>
        <position position="1197"/>
    </location>
</feature>
<accession>P22147</accession>
<accession>D6VTX9</accession>
<keyword id="KW-0002">3D-structure</keyword>
<keyword id="KW-0963">Cytoplasm</keyword>
<keyword id="KW-0903">Direct protein sequencing</keyword>
<keyword id="KW-0269">Exonuclease</keyword>
<keyword id="KW-0378">Hydrolase</keyword>
<keyword id="KW-0415">Karyogamy</keyword>
<keyword id="KW-0460">Magnesium</keyword>
<keyword id="KW-0493">Microtubule</keyword>
<keyword id="KW-0866">Nonsense-mediated mRNA decay</keyword>
<keyword id="KW-0540">Nuclease</keyword>
<keyword id="KW-0597">Phosphoprotein</keyword>
<keyword id="KW-1185">Reference proteome</keyword>
<keyword id="KW-0694">RNA-binding</keyword>
<keyword id="KW-0698">rRNA processing</keyword>
<reference key="1">
    <citation type="journal article" date="1990" name="Genetics">
        <title>kem mutations affect nuclear fusion in Saccharomyces cerevisiae.</title>
        <authorList>
            <person name="Kim J."/>
            <person name="Ljungdahl P.O."/>
            <person name="Fink G.R."/>
        </authorList>
    </citation>
    <scope>NUCLEOTIDE SEQUENCE [GENOMIC DNA]</scope>
    <scope>FUNCTION</scope>
</reference>
<reference key="2">
    <citation type="journal article" date="1991" name="Mol. Cell. Biol.">
        <title>Molecular and genetic analysis of the gene encoding the Saccharomyces cerevisiae strand exchange protein Sep1.</title>
        <authorList>
            <person name="Tishkoff D."/>
            <person name="Johnson A.W."/>
            <person name="Kolodner R.D."/>
        </authorList>
    </citation>
    <scope>NUCLEOTIDE SEQUENCE [GENOMIC DNA]</scope>
    <scope>PARTIAL PROTEIN SEQUENCE</scope>
</reference>
<reference key="3">
    <citation type="journal article" date="1991" name="Mol. Cell. Biol.">
        <title>Cloning and characterization of DST2, the gene for DNA strand transfer protein beta from Saccharomyces cerevisiae.</title>
        <authorList>
            <person name="Dykstra C.C."/>
            <person name="Kitada K."/>
            <person name="Clark A.B."/>
            <person name="Hamatake R.K."/>
            <person name="Sugino A."/>
        </authorList>
    </citation>
    <scope>NUCLEOTIDE SEQUENCE [GENOMIC DNA]</scope>
    <source>
        <strain>ATCC 204626 / S288c / A364A</strain>
    </source>
</reference>
<reference key="4">
    <citation type="journal article" date="1990" name="Gene">
        <title>Disruption of the gene XRN1, coding for a 5'--&gt;3' exoribonuclease, restricts yeast cell growth.</title>
        <authorList>
            <person name="Larimer F.W."/>
            <person name="Stevens A."/>
        </authorList>
    </citation>
    <scope>NUCLEOTIDE SEQUENCE [GENOMIC DNA]</scope>
</reference>
<reference key="5">
    <citation type="journal article" date="1991" name="Nucleic Acids Res.">
        <title>rar mutations which increase artificial chromosome stability in Saccharomyces cerevisiae identify transcription and recombination proteins.</title>
        <authorList>
            <person name="Kipling D."/>
            <person name="Tambini C."/>
            <person name="Kearsey S.E."/>
        </authorList>
    </citation>
    <scope>NUCLEOTIDE SEQUENCE [GENOMIC DNA]</scope>
    <scope>DISRUPTION PHENOTYPE</scope>
</reference>
<reference key="6">
    <citation type="journal article" date="1995" name="Yeast">
        <title>The sequence of an 11.1 kb fragment on the left arm of Saccharomyces cerevisiae chromosome VII reveals six open reading frames including NSP49, KEM1 and four putative new genes.</title>
        <authorList>
            <person name="Bertani I."/>
            <person name="Coglievina M."/>
            <person name="Zaccaria P."/>
            <person name="Klima R."/>
            <person name="Bruschi C.V."/>
        </authorList>
    </citation>
    <scope>NUCLEOTIDE SEQUENCE [GENOMIC DNA]</scope>
    <source>
        <strain>ATCC 96604 / S288c / FY1679</strain>
    </source>
</reference>
<reference key="7">
    <citation type="journal article" date="1997" name="Nature">
        <title>The nucleotide sequence of Saccharomyces cerevisiae chromosome VII.</title>
        <authorList>
            <person name="Tettelin H."/>
            <person name="Agostoni-Carbone M.L."/>
            <person name="Albermann K."/>
            <person name="Albers M."/>
            <person name="Arroyo J."/>
            <person name="Backes U."/>
            <person name="Barreiros T."/>
            <person name="Bertani I."/>
            <person name="Bjourson A.J."/>
            <person name="Brueckner M."/>
            <person name="Bruschi C.V."/>
            <person name="Carignani G."/>
            <person name="Castagnoli L."/>
            <person name="Cerdan E."/>
            <person name="Clemente M.L."/>
            <person name="Coblenz A."/>
            <person name="Coglievina M."/>
            <person name="Coissac E."/>
            <person name="Defoor E."/>
            <person name="Del Bino S."/>
            <person name="Delius H."/>
            <person name="Delneri D."/>
            <person name="de Wergifosse P."/>
            <person name="Dujon B."/>
            <person name="Durand P."/>
            <person name="Entian K.-D."/>
            <person name="Eraso P."/>
            <person name="Escribano V."/>
            <person name="Fabiani L."/>
            <person name="Fartmann B."/>
            <person name="Feroli F."/>
            <person name="Feuermann M."/>
            <person name="Frontali L."/>
            <person name="Garcia-Gonzalez M."/>
            <person name="Garcia-Saez M.I."/>
            <person name="Goffeau A."/>
            <person name="Guerreiro P."/>
            <person name="Hani J."/>
            <person name="Hansen M."/>
            <person name="Hebling U."/>
            <person name="Hernandez K."/>
            <person name="Heumann K."/>
            <person name="Hilger F."/>
            <person name="Hofmann B."/>
            <person name="Indge K.J."/>
            <person name="James C.M."/>
            <person name="Klima R."/>
            <person name="Koetter P."/>
            <person name="Kramer B."/>
            <person name="Kramer W."/>
            <person name="Lauquin G."/>
            <person name="Leuther H."/>
            <person name="Louis E.J."/>
            <person name="Maillier E."/>
            <person name="Marconi A."/>
            <person name="Martegani E."/>
            <person name="Mazon M.J."/>
            <person name="Mazzoni C."/>
            <person name="McReynolds A.D.K."/>
            <person name="Melchioretto P."/>
            <person name="Mewes H.-W."/>
            <person name="Minenkova O."/>
            <person name="Mueller-Auer S."/>
            <person name="Nawrocki A."/>
            <person name="Netter P."/>
            <person name="Neu R."/>
            <person name="Nombela C."/>
            <person name="Oliver S.G."/>
            <person name="Panzeri L."/>
            <person name="Paoluzi S."/>
            <person name="Plevani P."/>
            <person name="Portetelle D."/>
            <person name="Portillo F."/>
            <person name="Potier S."/>
            <person name="Purnelle B."/>
            <person name="Rieger M."/>
            <person name="Riles L."/>
            <person name="Rinaldi T."/>
            <person name="Robben J."/>
            <person name="Rodrigues-Pousada C."/>
            <person name="Rodriguez-Belmonte E."/>
            <person name="Rodriguez-Torres A.M."/>
            <person name="Rose M."/>
            <person name="Ruzzi M."/>
            <person name="Saliola M."/>
            <person name="Sanchez-Perez M."/>
            <person name="Schaefer B."/>
            <person name="Schaefer M."/>
            <person name="Scharfe M."/>
            <person name="Schmidheini T."/>
            <person name="Schreer A."/>
            <person name="Skala J."/>
            <person name="Souciet J.-L."/>
            <person name="Steensma H.Y."/>
            <person name="Talla E."/>
            <person name="Thierry A."/>
            <person name="Vandenbol M."/>
            <person name="van der Aart Q.J.M."/>
            <person name="Van Dyck L."/>
            <person name="Vanoni M."/>
            <person name="Verhasselt P."/>
            <person name="Voet M."/>
            <person name="Volckaert G."/>
            <person name="Wambutt R."/>
            <person name="Watson M.D."/>
            <person name="Weber N."/>
            <person name="Wedler E."/>
            <person name="Wedler H."/>
            <person name="Wipfli P."/>
            <person name="Wolf K."/>
            <person name="Wright L.F."/>
            <person name="Zaccaria P."/>
            <person name="Zimmermann M."/>
            <person name="Zollner A."/>
            <person name="Kleine K."/>
        </authorList>
    </citation>
    <scope>NUCLEOTIDE SEQUENCE [LARGE SCALE GENOMIC DNA]</scope>
    <source>
        <strain>ATCC 204508 / S288c</strain>
    </source>
</reference>
<reference key="8">
    <citation type="journal article" date="2014" name="G3 (Bethesda)">
        <title>The reference genome sequence of Saccharomyces cerevisiae: Then and now.</title>
        <authorList>
            <person name="Engel S.R."/>
            <person name="Dietrich F.S."/>
            <person name="Fisk D.G."/>
            <person name="Binkley G."/>
            <person name="Balakrishnan R."/>
            <person name="Costanzo M.C."/>
            <person name="Dwight S.S."/>
            <person name="Hitz B.C."/>
            <person name="Karra K."/>
            <person name="Nash R.S."/>
            <person name="Weng S."/>
            <person name="Wong E.D."/>
            <person name="Lloyd P."/>
            <person name="Skrzypek M.S."/>
            <person name="Miyasato S.R."/>
            <person name="Simison M."/>
            <person name="Cherry J.M."/>
        </authorList>
    </citation>
    <scope>GENOME REANNOTATION</scope>
    <source>
        <strain>ATCC 204508 / S288c</strain>
    </source>
</reference>
<reference key="9">
    <citation type="journal article" date="1991" name="J. Biol. Chem.">
        <title>Strand exchange protein 1 from Saccharomyces cerevisiae. A novel multifunctional protein that contains DNA strand exchange and exonuclease activities.</title>
        <authorList>
            <person name="Johnson A.W."/>
            <person name="Kolodner R.D."/>
        </authorList>
    </citation>
    <scope>CHARACTERIZATION OF EXONUCLEASE ACTIVITY</scope>
</reference>
<reference key="10">
    <citation type="journal article" date="1992" name="Gene">
        <title>Characterization of the XRN1 gene encoding a 5'--&gt;3' exoribonuclease: sequence data and analysis of disparate protein and mRNA levels of gene-disrupted yeast cells.</title>
        <authorList>
            <person name="Larimer F.W."/>
            <person name="Hsu C.L."/>
            <person name="Maupin M.K."/>
            <person name="Stevens A."/>
        </authorList>
    </citation>
    <scope>CHARACTERIZATION OF EXORIBONUCLEASE ACTIVITY</scope>
</reference>
<reference key="11">
    <citation type="journal article" date="1994" name="Genes Dev.">
        <title>The Sep1 strand exchange protein from Saccharomyces cerevisiae promotes a paranemic joint between homologous DNA molecules.</title>
        <authorList>
            <person name="Chen J."/>
            <person name="Kanaar R."/>
            <person name="Cozzarelli N.R."/>
        </authorList>
    </citation>
    <scope>FUNCTION</scope>
</reference>
<reference key="12">
    <citation type="journal article" date="1994" name="J. Biol. Chem.">
        <title>The activity of the Saccharomyces cerevisiae strand exchange protein 1 intrinsic exonuclease during joint molecule formation.</title>
        <authorList>
            <person name="Johnson A.W."/>
            <person name="Kolodner R.D."/>
        </authorList>
    </citation>
    <scope>CHARACTERIZATION OF EXONUCLEASE ACTIVITY DURING STRAND EXCHANGE</scope>
</reference>
<reference key="13">
    <citation type="journal article" date="1994" name="J. Biol. Chem.">
        <title>Characterization of the interaction of Saccharomyces cerevisiae strand exchange protein 1 with DNA.</title>
        <authorList>
            <person name="Johnson A.W."/>
            <person name="Kolodner R.D."/>
        </authorList>
    </citation>
    <scope>DNA-BINDING PROPERTIES</scope>
</reference>
<reference key="14">
    <citation type="journal article" date="1994" name="J. Biol. Chem.">
        <title>A multifunctional exonuclease from vegetative Schizosaccharomyces pombe cells exhibiting in vitro strand exchange activity.</title>
        <authorList>
            <person name="Kaeslin E."/>
            <person name="Heyer W.-D."/>
        </authorList>
    </citation>
    <scope>CHARACTERIZATION OF EXONUCLEASE AND STRAND EXCHANGE ACTIVITIES</scope>
</reference>
<reference key="15">
    <citation type="journal article" date="1994" name="Cell">
        <title>The yeast KEM1 gene encodes a nuclease specific for G4 tetraplex DNA: implication of in vivo functions for this novel DNA structure.</title>
        <authorList>
            <person name="Liu Z."/>
            <person name="Gilbert W."/>
        </authorList>
    </citation>
    <scope>CHARACTERIZATION OF SPECIFICITY FOR G4 TETRAPLEX DNA</scope>
</reference>
<reference key="16">
    <citation type="journal article" date="1995" name="EMBO J.">
        <title>A role of Sep1 (= Kem1, Xrn1) as a microtubule-associated protein in Saccharomyces cerevisiae.</title>
        <authorList>
            <person name="Interthal H."/>
            <person name="Bellocq C."/>
            <person name="Baehler J."/>
            <person name="Bashkirov V.I."/>
            <person name="Edelstein S.J."/>
            <person name="Heyer W.-D."/>
        </authorList>
    </citation>
    <scope>ASSOCIATION WITH MICROTUBULES</scope>
</reference>
<reference key="17">
    <citation type="journal article" date="1995" name="Genetics">
        <title>The sep1 mutant of Saccharomyces cerevisiae arrests in pachytene and is deficient in meiotic recombination.</title>
        <authorList>
            <person name="Tishkoff D.X."/>
            <person name="Rockmill B."/>
            <person name="Roeder G.S."/>
            <person name="Kolodner R.D."/>
        </authorList>
    </citation>
    <scope>DISRUPTION PHENOTYPE</scope>
</reference>
<reference key="18">
    <citation type="journal article" date="1995" name="Mol. Cell. Biol.">
        <title>Regulation and intracellular localization of Saccharomyces cerevisiae strand exchange protein 1 (Sep1/Xrn1/Kem1), a multifunctional exonuclease.</title>
        <authorList>
            <person name="Heyer W.-D."/>
            <person name="Johnson A.W."/>
            <person name="Reinhart U."/>
            <person name="Kolodner R.D."/>
        </authorList>
    </citation>
    <scope>SUBCELLULAR LOCATION</scope>
</reference>
<reference key="19">
    <citation type="journal article" date="1995" name="Proc. Natl. Acad. Sci. U.S.A.">
        <title>Gene disruption of a G4-DNA-dependent nuclease in yeast leads to cellular senescence and telomere shortening.</title>
        <authorList>
            <person name="Liu Z."/>
            <person name="Lee A."/>
            <person name="Gilbert W."/>
        </authorList>
    </citation>
    <scope>FUNCTION</scope>
</reference>
<reference key="20">
    <citation type="journal article" date="1997" name="Mol. Cell. Biol.">
        <title>Rat1p and Xrn1p are functionally interchangeable exoribonucleases that are restricted to and required in the nucleus and cytoplasm, respectively.</title>
        <authorList>
            <person name="Johnson A.W."/>
        </authorList>
    </citation>
    <scope>FUNCTION</scope>
</reference>
<reference key="21">
    <citation type="journal article" date="1998" name="Mol. Cell. Biol.">
        <title>Processing of the precursors to small nucleolar RNAs and rRNAs requires common components.</title>
        <authorList>
            <person name="Petfalski E."/>
            <person name="Dandekar T."/>
            <person name="Henry Y."/>
            <person name="Tollervey D."/>
        </authorList>
    </citation>
    <scope>FUNCTION</scope>
</reference>
<reference key="22">
    <citation type="journal article" date="1998" name="Mol. Cell. Biol.">
        <title>Telomere length regulation and telomeric chromatin require the nonsense-mediated mRNA decay pathway.</title>
        <authorList>
            <person name="Lew J.E."/>
            <person name="Enomoto S."/>
            <person name="Berman J."/>
        </authorList>
    </citation>
    <scope>FUNCTION</scope>
</reference>
<reference key="23">
    <citation type="journal article" date="1998" name="Nucleic Acids Res.">
        <title>Mutational analysis of exoribonuclease I from Saccharomyces cerevisiae.</title>
        <authorList>
            <person name="Page A.M."/>
            <person name="Davis K."/>
            <person name="Molineux C."/>
            <person name="Kolodner R.D."/>
            <person name="Johnson A.W."/>
        </authorList>
    </citation>
    <scope>FUNCTION</scope>
    <scope>MUTAGENESIS OF ASN-37; HIS-41; ASP-86; GLY-87; LYS-93; GLN-97; ARG-101; GLU-178; CYS-201; LEU-592; TYR-710; TRP-798; GLU-1024; TYR-1043 AND SER-1197</scope>
</reference>
<reference key="24">
    <citation type="journal article" date="1998" name="EMBO J.">
        <title>The 3' to 5' degradation of yeast mRNAs is a general mechanism for mRNA turnover that requires the SKI2 DEVH box protein and 3' to 5' exonucleases of the exosome complex.</title>
        <authorList>
            <person name="Anderson J.S.J."/>
            <person name="Parker R.P."/>
        </authorList>
    </citation>
    <scope>FUNCTION</scope>
</reference>
<reference key="25">
    <citation type="journal article" date="1999" name="Mol. Cell. Biol.">
        <title>Active-site mutations in the Xrn1p exoribonuclease of Saccharomyces cerevisiae reveal a specific role in meiosis.</title>
        <authorList>
            <person name="Solinger J.A."/>
            <person name="Pascolini D."/>
            <person name="Heyer W.-D."/>
        </authorList>
    </citation>
    <scope>FUNCTION</scope>
    <scope>MUTAGENESIS OF ASP-206 AND ASP-208</scope>
</reference>
<reference key="26">
    <citation type="journal article" date="2000" name="RNA">
        <title>The final step in the formation of 25S rRNA in Saccharomyces cerevisiae is performed by 5'-&gt;3' exonucleases.</title>
        <authorList>
            <person name="Geerlings T.H."/>
            <person name="Vos J.C."/>
            <person name="Raue H.A."/>
        </authorList>
    </citation>
    <scope>FUNCTION</scope>
</reference>
<reference key="27">
    <citation type="journal article" date="2001" name="Mol. Cell. Biol.">
        <title>Upf1p, Nmd2p, and Upf3p regulate the decapping and exonucleolytic degradation of both nonsense-containing mRNAs and wild-type mRNAs.</title>
        <authorList>
            <person name="He F."/>
            <person name="Jacobson A."/>
        </authorList>
    </citation>
    <scope>FUNCTION</scope>
</reference>
<reference key="28">
    <citation type="journal article" date="2002" name="FEMS Microbiol. Lett.">
        <title>KEM1 is involved in filamentous growth of Saccharomyces cerevisiae.</title>
        <authorList>
            <person name="Kim J."/>
            <person name="Kim J."/>
        </authorList>
    </citation>
    <scope>FUNCTION</scope>
</reference>
<reference key="29">
    <citation type="journal article" date="2002" name="Science">
        <title>An mRNA surveillance mechanism that eliminates transcripts lacking termination codons.</title>
        <authorList>
            <person name="Frischmeyer P.A."/>
            <person name="van Hoof A."/>
            <person name="O'Donnell K."/>
            <person name="Guerrerio A.L."/>
            <person name="Parker R."/>
            <person name="Dietz H.C."/>
        </authorList>
    </citation>
    <scope>FUNCTION</scope>
</reference>
<reference key="30">
    <citation type="journal article" date="2003" name="Mol. Cell">
        <title>Genome-wide analysis of mRNAs regulated by the nonsense-mediated and 5' to 3' mRNA decay pathways in yeast.</title>
        <authorList>
            <person name="He F."/>
            <person name="Li X."/>
            <person name="Spatrick P."/>
            <person name="Casillo R."/>
            <person name="Dong S."/>
            <person name="Jacobson A."/>
        </authorList>
    </citation>
    <scope>FUNCTION</scope>
</reference>
<reference key="31">
    <citation type="journal article" date="2003" name="Nature">
        <title>Global analysis of protein expression in yeast.</title>
        <authorList>
            <person name="Ghaemmaghami S."/>
            <person name="Huh W.-K."/>
            <person name="Bower K."/>
            <person name="Howson R.W."/>
            <person name="Belle A."/>
            <person name="Dephoure N."/>
            <person name="O'Shea E.K."/>
            <person name="Weissman J.S."/>
        </authorList>
    </citation>
    <scope>LEVEL OF PROTEIN EXPRESSION [LARGE SCALE ANALYSIS]</scope>
</reference>
<reference key="32">
    <citation type="journal article" date="2003" name="Nucleic Acids Res.">
        <title>The Upf-dependent decay of wild-type PPR1 mRNA depends on its 5'-UTR and first 92 ORF nucleotides.</title>
        <authorList>
            <person name="Kebaara B."/>
            <person name="Nazarenus T."/>
            <person name="Taylor R."/>
            <person name="Forch A."/>
            <person name="Atkin A.L."/>
        </authorList>
    </citation>
    <scope>FUNCTION</scope>
</reference>
<reference key="33">
    <citation type="journal article" date="2003" name="Nucleic Acids Res.">
        <title>Initiation-mediated mRNA decay in yeast affects heat-shock mRNAs, and works through decapping and 5'-to-3' hydrolysis.</title>
        <authorList>
            <person name="Heikkinen H.L."/>
            <person name="Llewellyn S.A."/>
            <person name="Barnes C.A."/>
        </authorList>
    </citation>
    <scope>FUNCTION</scope>
</reference>
<reference key="34">
    <citation type="journal article" date="2003" name="RNA">
        <title>The roles of endonucleolytic cleavage and exonucleolytic digestion in the 5'-end processing of S. cerevisiae box C/D snoRNAs.</title>
        <authorList>
            <person name="Lee C.Y."/>
            <person name="Lee A."/>
            <person name="Chanfreau G."/>
        </authorList>
    </citation>
    <scope>FUNCTION</scope>
</reference>
<reference key="35">
    <citation type="journal article" date="2003" name="Science">
        <title>Decapping and decay of messenger RNA occur in cytoplasmic processing bodies.</title>
        <authorList>
            <person name="Sheth U."/>
            <person name="Parker R."/>
        </authorList>
    </citation>
    <scope>SUBCELLULAR LOCATION</scope>
</reference>
<reference key="36">
    <citation type="journal article" date="2004" name="Biochem. Biophys. Res. Commun.">
        <title>Deletion of OSH3 gene confers resistance against ISP-1 in Saccharomyces cerevisiae.</title>
        <authorList>
            <person name="Yano T."/>
            <person name="Inukai M."/>
            <person name="Isono F."/>
        </authorList>
    </citation>
    <scope>FUNCTION</scope>
</reference>
<reference key="37">
    <citation type="journal article" date="2004" name="Biochem. Biophys. Res. Commun.">
        <title>Posttranscriptional regulation of the karyogamy gene by Kem1p/Xrn1p exoribonuclease and Rok1p RNA helicase of Saccharomyces cerevisiae.</title>
        <authorList>
            <person name="Kim J."/>
            <person name="Jeon S."/>
            <person name="Yang Y.-S."/>
            <person name="Kim J."/>
        </authorList>
    </citation>
    <scope>FUNCTION</scope>
</reference>
<reference key="38">
    <citation type="journal article" date="2004" name="Mol. Cell. Biol.">
        <title>RNase MRP cleaves the CLB2 mRNA to promote cell cycle progression: novel method of mRNA degradation.</title>
        <authorList>
            <person name="Gill T."/>
            <person name="Cai T."/>
            <person name="Aulds J."/>
            <person name="Wierzbicki S."/>
            <person name="Schmitt M.E."/>
        </authorList>
    </citation>
    <scope>FUNCTION</scope>
</reference>
<reference key="39">
    <citation type="journal article" date="2005" name="Curr. Genet.">
        <title>A role for KEM1 at the START of the cell cycle in Saccharomyces cerevisiae.</title>
        <authorList>
            <person name="Pathak R."/>
            <person name="Bogomolnaya L.M."/>
            <person name="Guo J."/>
            <person name="Polymenis M."/>
        </authorList>
    </citation>
    <scope>FUNCTION</scope>
</reference>
<reference key="40">
    <citation type="journal article" date="2005" name="J. Biol. Chem.">
        <title>Regulation and surveillance of normal and 3'-extended forms of the yeast aci-reductone dioxygenase mRNA by RNase III cleavage and exonucleolytic degradation.</title>
        <authorList>
            <person name="Zer C."/>
            <person name="Chanfreau G."/>
        </authorList>
    </citation>
    <scope>FUNCTION</scope>
</reference>
<reference key="41">
    <citation type="journal article" date="2005" name="Mol. Cell">
        <title>Multiple RNA surveillance pathways limit aberrant expression of iron uptake mRNAs and prevent iron toxicity in S. cerevisiae.</title>
        <authorList>
            <person name="Lee A."/>
            <person name="Henras A.K."/>
            <person name="Chanfreau G."/>
        </authorList>
    </citation>
    <scope>FUNCTION</scope>
</reference>
<reference key="42">
    <citation type="journal article" date="2005" name="Mol. Cell. Proteomics">
        <title>Quantitative phosphoproteomics applied to the yeast pheromone signaling pathway.</title>
        <authorList>
            <person name="Gruhler A."/>
            <person name="Olsen J.V."/>
            <person name="Mohammed S."/>
            <person name="Mortensen P."/>
            <person name="Faergeman N.J."/>
            <person name="Mann M."/>
            <person name="Jensen O.N."/>
        </authorList>
    </citation>
    <scope>IDENTIFICATION BY MASS SPECTROMETRY [LARGE SCALE ANALYSIS]</scope>
    <source>
        <strain>YAL6B</strain>
    </source>
</reference>
<reference key="43">
    <citation type="journal article" date="2006" name="J. Biol. Chem.">
        <title>Sodium-induced GCN4 expression controls the accumulation of the 5' to 3' RNA degradation inhibitor, 3'-phosphoadenosine 5'-phosphate.</title>
        <authorList>
            <person name="Todeschini A.-L."/>
            <person name="Condon C."/>
            <person name="Benard L."/>
        </authorList>
    </citation>
    <scope>ACTIVITY REGULATION</scope>
</reference>
<reference key="44">
    <citation type="journal article" date="2006" name="J. Biol. Chem.">
        <title>Determinants of Rbp1p localization in specific cytoplasmic mRNA-processing foci, P-bodies.</title>
        <authorList>
            <person name="Jang L.-T."/>
            <person name="Buu L.-M."/>
            <person name="Lee F.-J.S."/>
        </authorList>
    </citation>
    <scope>FUNCTION</scope>
</reference>
<reference key="45">
    <citation type="journal article" date="2006" name="J. Virol.">
        <title>Suppression of viral RNA recombination by a host exoribonuclease.</title>
        <authorList>
            <person name="Cheng C.-P."/>
            <person name="Serviene E."/>
            <person name="Nagy P.D."/>
        </authorList>
    </citation>
    <scope>FUNCTION</scope>
</reference>
<reference key="46">
    <citation type="journal article" date="2006" name="RNA">
        <title>Virus-like particles of the Ty3 retrotransposon assemble in association with P-body components.</title>
        <authorList>
            <person name="Beliakova-Bethell N."/>
            <person name="Beckham C."/>
            <person name="Giddings T.H. Jr."/>
            <person name="Winey M."/>
            <person name="Parker R."/>
            <person name="Sandmeyer S."/>
        </authorList>
    </citation>
    <scope>FUNCTION</scope>
    <scope>SUBCELLULAR LOCATION</scope>
</reference>
<reference key="47">
    <citation type="journal article" date="2006" name="RNA">
        <title>Yeast transcripts cleaved by an internal ribozyme provide new insight into the role of the cap and poly(A) tail in translation and mRNA decay.</title>
        <authorList>
            <person name="Meaux S."/>
            <person name="Van Hoof A."/>
        </authorList>
    </citation>
    <scope>FUNCTION</scope>
</reference>
<reference key="48">
    <citation type="journal article" date="2007" name="Genetics">
        <title>The sensitivity of yeast mutants to oleic acid implicates the peroxisome and other processes in membrane function.</title>
        <authorList>
            <person name="Lockshon D."/>
            <person name="Surface L.E."/>
            <person name="Kerr E.O."/>
            <person name="Kaeberlein M."/>
            <person name="Kennedy B.K."/>
        </authorList>
    </citation>
    <scope>DISRUPTION PHENOTYPE</scope>
</reference>
<reference key="49">
    <citation type="journal article" date="2007" name="J. Biol. Chem.">
        <title>Respiratory deficiency mediates the regulation of CHO1-encoded phosphatidylserine synthase by mRNA stability in Saccharomyces cerevisiae.</title>
        <authorList>
            <person name="Choi H.-S."/>
            <person name="Carman G.M."/>
        </authorList>
    </citation>
    <scope>FUNCTION</scope>
</reference>
<reference key="50">
    <citation type="journal article" date="2007" name="J. Proteome Res.">
        <title>Large-scale phosphorylation analysis of alpha-factor-arrested Saccharomyces cerevisiae.</title>
        <authorList>
            <person name="Li X."/>
            <person name="Gerber S.A."/>
            <person name="Rudner A.D."/>
            <person name="Beausoleil S.A."/>
            <person name="Haas W."/>
            <person name="Villen J."/>
            <person name="Elias J.E."/>
            <person name="Gygi S.P."/>
        </authorList>
    </citation>
    <scope>IDENTIFICATION BY MASS SPECTROMETRY [LARGE SCALE ANALYSIS]</scope>
    <source>
        <strain>ADR376</strain>
    </source>
</reference>
<reference key="51">
    <citation type="journal article" date="2007" name="Mol. Biol. Cell">
        <title>Analysis of P-body assembly in Saccharomyces cerevisiae.</title>
        <authorList>
            <person name="Teixeira D."/>
            <person name="Parker R."/>
        </authorList>
    </citation>
    <scope>SUBCELLULAR LOCATION</scope>
</reference>
<reference key="52">
    <citation type="journal article" date="2007" name="Proc. Natl. Acad. Sci. U.S.A.">
        <title>Analysis of phosphorylation sites on proteins from Saccharomyces cerevisiae by electron transfer dissociation (ETD) mass spectrometry.</title>
        <authorList>
            <person name="Chi A."/>
            <person name="Huttenhower C."/>
            <person name="Geer L.Y."/>
            <person name="Coon J.J."/>
            <person name="Syka J.E.P."/>
            <person name="Bai D.L."/>
            <person name="Shabanowitz J."/>
            <person name="Burke D.J."/>
            <person name="Troyanskaya O.G."/>
            <person name="Hunt D.F."/>
        </authorList>
    </citation>
    <scope>PHOSPHORYLATION [LARGE SCALE ANALYSIS] AT SER-1510</scope>
    <scope>IDENTIFICATION BY MASS SPECTROMETRY [LARGE SCALE ANALYSIS]</scope>
</reference>
<reference key="53">
    <citation type="journal article" date="2008" name="Genes Dev.">
        <title>Degradation of several hypomodified mature tRNA species in Saccharomyces cerevisiae is mediated by Met22 and the 5'-3' exonucleases Rat1 and Xrn1.</title>
        <authorList>
            <person name="Chernyakov I."/>
            <person name="Whipple J.M."/>
            <person name="Kotelawala L."/>
            <person name="Grayhack E.J."/>
            <person name="Phizicky E.M."/>
        </authorList>
    </citation>
    <scope>FUNCTION</scope>
</reference>
<reference key="54">
    <citation type="journal article" date="2008" name="Genes Dev.">
        <title>Transcription in the nucleus and mRNA decay in the cytoplasm are coupled processes.</title>
        <authorList>
            <person name="Goler-Baron V."/>
            <person name="Selitrennik M."/>
            <person name="Barkai O."/>
            <person name="Haimovich G."/>
            <person name="Lotan R."/>
            <person name="Choder M."/>
        </authorList>
    </citation>
    <scope>FUNCTION</scope>
</reference>
<reference key="55">
    <citation type="journal article" date="2008" name="Genetics">
        <title>Synthetic genetic array analysis in Saccharomyces cerevisiae provides evidence for an interaction between RAT8/DBP5 and genes encoding P-body components.</title>
        <authorList>
            <person name="Scarcelli J.J."/>
            <person name="Viggiano S."/>
            <person name="Hodge C.A."/>
            <person name="Heath C.V."/>
            <person name="Amberg D.C."/>
            <person name="Cole C.N."/>
        </authorList>
    </citation>
    <scope>SUBCELLULAR LOCATION</scope>
</reference>
<reference key="56">
    <citation type="journal article" date="2008" name="J. Biol. Chem.">
        <title>20S RNA narnavirus defies the antiviral activity of SKI1/XRN1 in Saccharomyces cerevisiae.</title>
        <authorList>
            <person name="Esteban R."/>
            <person name="Vega L."/>
            <person name="Fujimura T."/>
        </authorList>
    </citation>
    <scope>FUNCTION</scope>
</reference>
<reference key="57">
    <citation type="journal article" date="2008" name="J. Biol. Chem.">
        <title>The Cth2 ARE-binding protein recruits the Dhh1 helicase to promote the decay of succinate dehydrogenase SDH4 mRNA in response to iron deficiency.</title>
        <authorList>
            <person name="Pedro-Segura E."/>
            <person name="Vergara S.V."/>
            <person name="Rodriguez-Navarro S."/>
            <person name="Parker R."/>
            <person name="Thiele D.J."/>
            <person name="Puig S."/>
        </authorList>
    </citation>
    <scope>FUNCTION</scope>
</reference>
<reference key="58">
    <citation type="journal article" date="2008" name="Mol. Biol. Cell">
        <title>The DEAD-box RNA helicase Ded1p affects and accumulates in Saccharomyces cerevisiae P-bodies.</title>
        <authorList>
            <person name="Beckham C."/>
            <person name="Hilliker A."/>
            <person name="Cziko A.-M."/>
            <person name="Noueiry A."/>
            <person name="Ramaswami M."/>
            <person name="Parker R."/>
        </authorList>
    </citation>
    <scope>FUNCTION</scope>
    <scope>SUBCELLULAR LOCATION</scope>
</reference>
<reference key="59">
    <citation type="journal article" date="2008" name="Mol. Cell. Proteomics">
        <title>A multidimensional chromatography technology for in-depth phosphoproteome analysis.</title>
        <authorList>
            <person name="Albuquerque C.P."/>
            <person name="Smolka M.B."/>
            <person name="Payne S.H."/>
            <person name="Bafna V."/>
            <person name="Eng J."/>
            <person name="Zhou H."/>
        </authorList>
    </citation>
    <scope>PHOSPHORYLATION [LARGE SCALE ANALYSIS] AT SER-1510</scope>
    <scope>IDENTIFICATION BY MASS SPECTROMETRY [LARGE SCALE ANALYSIS]</scope>
</reference>
<reference key="60">
    <citation type="journal article" date="2008" name="RNA">
        <title>S. cerevisiae Vts1p induces deadenylation-dependent transcript degradation and interacts with the Ccr4p-Pop2p-Not deadenylase complex.</title>
        <authorList>
            <person name="Rendl L.M."/>
            <person name="Bieman M.A."/>
            <person name="Smibert C.A."/>
        </authorList>
    </citation>
    <scope>FUNCTION</scope>
</reference>
<reference key="61">
    <citation type="journal article" date="2009" name="RNA">
        <title>Cordycepin interferes with 3' end formation in yeast independently of its potential to terminate RNA chain elongation.</title>
        <authorList>
            <person name="Holbein S."/>
            <person name="Wengi A."/>
            <person name="Decourty L."/>
            <person name="Freimoser F.M."/>
            <person name="Jacquier A."/>
            <person name="Dichtl B."/>
        </authorList>
    </citation>
    <scope>FUNCTION</scope>
</reference>
<reference key="62">
    <citation type="journal article" date="2009" name="Science">
        <title>Global analysis of Cdk1 substrate phosphorylation sites provides insights into evolution.</title>
        <authorList>
            <person name="Holt L.J."/>
            <person name="Tuch B.B."/>
            <person name="Villen J."/>
            <person name="Johnson A.D."/>
            <person name="Gygi S.P."/>
            <person name="Morgan D.O."/>
        </authorList>
    </citation>
    <scope>PHOSPHORYLATION [LARGE SCALE ANALYSIS] AT THR-1506 AND SER-1510</scope>
    <scope>IDENTIFICATION BY MASS SPECTROMETRY [LARGE SCALE ANALYSIS]</scope>
</reference>
<comment type="function">
    <text evidence="2 3 4 5 6 7 8 9 11 12 13 14 15 16 17 19 20 21 22 24 25 26 27 28 29 30 31 33 34 36 37 38 39 40 41">Multifunctional protein that exhibits several independent functions at different levels of the cellular processes. 5'-3' exonuclease component of the nonsense-mediated mRNA decay (NMD) which is a highly conserved mRNA degradation pathway, an RNA surveillance system whose role is to identify and rid cells of mRNA with premature termination codons and thus prevents accumulation of potentially harmful truncated proteins. The NMD pathway has a second role regulating the decay of wild-type mRNAs, and especially mRNAs that are important for telomere functions. Participate in CTH2-mediated and VTS1-mediated mRNA turnover. Involved in the degradation of several hypomodified mature tRNA species and participates in the 5'-processing or the degradation of the snoRNA precursors and rRNA processing. Involved in defense against virus and suppresses viral RNA recombination by rapidly removing the 5'-truncated RNAs, the substrates of recombination, and thus reducing the chance for recombination to occur in the parental strain. Required for the assembly of the virus-like particles of the Ty3 retrotransposon and contributes to the efficient generation of narnavirus 20S RNA by playing a major role in the elimination of the non-viral upstream sequences from the primary transcripts. Degrades single-stranded DNA (ss-DNA) and can renature complementary ss-DNA as well as catalyzes the formation of heteroduplex DNA from circular ss-DNA and homologous linear ds-DNA in vitro. Acts as a microtubule-associated protein which interacts with cytoplasmic microtubules through beta-tubulin and promotes in vitro assembly of tubulin into microtubules. Associates with microtubule functions such as chromosome transmission, nuclear migration, and SPB duplication. Has also a role in G1 to S transition and is involved in nuclear fusion during karyogamy. Required for the expression of ROK1 at the post-transcriptional level and for the alpha-factor induction of the karyogamy genes KAR3 and KAR4. Plays a role in filamentous growth.</text>
</comment>
<comment type="cofactor">
    <cofactor>
        <name>Mg(2+)</name>
        <dbReference type="ChEBI" id="CHEBI:18420"/>
    </cofactor>
    <text>Both strand exchange and nuclease activities require magnesium, for the strand exchange activity, calcium can replace magnesium when the linear ds-DNA has been first resected with an exogenous endonuclease.</text>
</comment>
<comment type="activity regulation">
    <text evidence="18">3'-phosphoadenosine 5'-phosphate (pAp) is an inhibitor of KEM1. Sodium-induced GCN4 expression reduces pAp accumulation by activating HAL2 expression, and therefore maintains mRNA degradation capacity which is likely to be important for the accurate and rapid adaptation of gene expression to salt stress.</text>
</comment>
<comment type="interaction">
    <interactant intactId="EBI-9642">
        <id>P22147</id>
    </interactant>
    <interactant intactId="EBI-270">
        <id>P53550</id>
        <label>DCP2</label>
    </interactant>
    <organismsDiffer>false</organismsDiffer>
    <experiments>3</experiments>
</comment>
<comment type="interaction">
    <interactant intactId="EBI-9642">
        <id>P22147</id>
    </interactant>
    <interactant intactId="EBI-180">
        <id>P38203</id>
        <label>LSM2</label>
    </interactant>
    <organismsDiffer>false</organismsDiffer>
    <experiments>3</experiments>
</comment>
<comment type="interaction">
    <interactant intactId="EBI-9642">
        <id>P22147</id>
    </interactant>
    <interactant intactId="EBI-188">
        <id>P40070</id>
        <label>LSM4</label>
    </interactant>
    <organismsDiffer>false</organismsDiffer>
    <experiments>4</experiments>
</comment>
<comment type="subcellular location">
    <subcellularLocation>
        <location>Cytoplasm</location>
    </subcellularLocation>
    <subcellularLocation>
        <location>Cytoplasm</location>
        <location>Perinuclear region</location>
    </subcellularLocation>
    <subcellularLocation>
        <location>Cytoplasm</location>
        <location>P-body</location>
    </subcellularLocation>
</comment>
<comment type="disruption phenotype">
    <text evidence="23 32 35">Mutations affect nuclear fusion, lead to reduced chromosome stability and defects in spindle pole body duplication and/or separation as well as loss of viability under conditions of nitrogen starvation. Homozygous diploids are unable to sporulate. Mutations also lead to arrest in pachytene and deficiency in meiotic recombination and sensitivity to oleate.</text>
</comment>
<comment type="miscellaneous">
    <text evidence="10">Present with 11700 molecules/cell in log phase SD medium.</text>
</comment>
<comment type="similarity">
    <text evidence="42">Belongs to the 5'-3' exonuclease family.</text>
</comment>
<protein>
    <recommendedName>
        <fullName>5'-3' exoribonuclease 1</fullName>
        <ecNumber>3.1.13.-</ecNumber>
    </recommendedName>
    <alternativeName>
        <fullName>DNA strand transfer protein beta</fullName>
        <shortName>STP-beta</shortName>
    </alternativeName>
    <alternativeName>
        <fullName>KAR(-)-enhancing mutation protein</fullName>
    </alternativeName>
    <alternativeName>
        <fullName>Strand exchange protein 1</fullName>
    </alternativeName>
    <alternativeName>
        <fullName>p175</fullName>
    </alternativeName>
</protein>
<evidence type="ECO:0000256" key="1">
    <source>
        <dbReference type="SAM" id="MobiDB-lite"/>
    </source>
</evidence>
<evidence type="ECO:0000269" key="2">
    <source>
    </source>
</evidence>
<evidence type="ECO:0000269" key="3">
    <source>
    </source>
</evidence>
<evidence type="ECO:0000269" key="4">
    <source>
    </source>
</evidence>
<evidence type="ECO:0000269" key="5">
    <source>
    </source>
</evidence>
<evidence type="ECO:0000269" key="6">
    <source>
    </source>
</evidence>
<evidence type="ECO:0000269" key="7">
    <source>
    </source>
</evidence>
<evidence type="ECO:0000269" key="8">
    <source>
    </source>
</evidence>
<evidence type="ECO:0000269" key="9">
    <source>
    </source>
</evidence>
<evidence type="ECO:0000269" key="10">
    <source>
    </source>
</evidence>
<evidence type="ECO:0000269" key="11">
    <source>
    </source>
</evidence>
<evidence type="ECO:0000269" key="12">
    <source>
    </source>
</evidence>
<evidence type="ECO:0000269" key="13">
    <source>
    </source>
</evidence>
<evidence type="ECO:0000269" key="14">
    <source>
    </source>
</evidence>
<evidence type="ECO:0000269" key="15">
    <source>
    </source>
</evidence>
<evidence type="ECO:0000269" key="16">
    <source>
    </source>
</evidence>
<evidence type="ECO:0000269" key="17">
    <source>
    </source>
</evidence>
<evidence type="ECO:0000269" key="18">
    <source>
    </source>
</evidence>
<evidence type="ECO:0000269" key="19">
    <source>
    </source>
</evidence>
<evidence type="ECO:0000269" key="20">
    <source>
    </source>
</evidence>
<evidence type="ECO:0000269" key="21">
    <source>
    </source>
</evidence>
<evidence type="ECO:0000269" key="22">
    <source>
    </source>
</evidence>
<evidence type="ECO:0000269" key="23">
    <source>
    </source>
</evidence>
<evidence type="ECO:0000269" key="24">
    <source>
    </source>
</evidence>
<evidence type="ECO:0000269" key="25">
    <source>
    </source>
</evidence>
<evidence type="ECO:0000269" key="26">
    <source>
    </source>
</evidence>
<evidence type="ECO:0000269" key="27">
    <source>
    </source>
</evidence>
<evidence type="ECO:0000269" key="28">
    <source>
    </source>
</evidence>
<evidence type="ECO:0000269" key="29">
    <source>
    </source>
</evidence>
<evidence type="ECO:0000269" key="30">
    <source>
    </source>
</evidence>
<evidence type="ECO:0000269" key="31">
    <source>
    </source>
</evidence>
<evidence type="ECO:0000269" key="32">
    <source>
    </source>
</evidence>
<evidence type="ECO:0000269" key="33">
    <source>
    </source>
</evidence>
<evidence type="ECO:0000269" key="34">
    <source>
    </source>
</evidence>
<evidence type="ECO:0000269" key="35">
    <source>
    </source>
</evidence>
<evidence type="ECO:0000269" key="36">
    <source>
    </source>
</evidence>
<evidence type="ECO:0000269" key="37">
    <source>
    </source>
</evidence>
<evidence type="ECO:0000269" key="38">
    <source>
    </source>
</evidence>
<evidence type="ECO:0000269" key="39">
    <source>
    </source>
</evidence>
<evidence type="ECO:0000269" key="40">
    <source>
    </source>
</evidence>
<evidence type="ECO:0000269" key="41">
    <source>
    </source>
</evidence>
<evidence type="ECO:0000305" key="42"/>
<evidence type="ECO:0007744" key="43">
    <source>
    </source>
</evidence>
<evidence type="ECO:0007744" key="44">
    <source>
    </source>
</evidence>
<evidence type="ECO:0007744" key="45">
    <source>
    </source>
</evidence>
<gene>
    <name type="primary">XRN1</name>
    <name type="synonym">DST2</name>
    <name type="synonym">KEM1</name>
    <name type="synonym">RAR5</name>
    <name type="synonym">SEP1</name>
    <name type="synonym">SKI1</name>
    <name type="ordered locus">YGL173C</name>
    <name type="ORF">G1645</name>
</gene>
<dbReference type="EC" id="3.1.13.-"/>
<dbReference type="EMBL" id="M90097">
    <property type="protein sequence ID" value="AAA35219.1"/>
    <property type="molecule type" value="Genomic_DNA"/>
</dbReference>
<dbReference type="EMBL" id="X54717">
    <property type="protein sequence ID" value="CAA38520.1"/>
    <property type="molecule type" value="Genomic_DNA"/>
</dbReference>
<dbReference type="EMBL" id="M58367">
    <property type="protein sequence ID" value="AAA35036.1"/>
    <property type="molecule type" value="Genomic_DNA"/>
</dbReference>
<dbReference type="EMBL" id="M36725">
    <property type="protein sequence ID" value="AAA35125.1"/>
    <property type="molecule type" value="Genomic_DNA"/>
</dbReference>
<dbReference type="EMBL" id="X61181">
    <property type="protein sequence ID" value="CAA43487.1"/>
    <property type="molecule type" value="Genomic_DNA"/>
</dbReference>
<dbReference type="EMBL" id="X84705">
    <property type="protein sequence ID" value="CAA59180.1"/>
    <property type="molecule type" value="Genomic_DNA"/>
</dbReference>
<dbReference type="EMBL" id="Z72695">
    <property type="protein sequence ID" value="CAA96885.1"/>
    <property type="molecule type" value="Genomic_DNA"/>
</dbReference>
<dbReference type="EMBL" id="BK006941">
    <property type="protein sequence ID" value="DAA07940.1"/>
    <property type="molecule type" value="Genomic_DNA"/>
</dbReference>
<dbReference type="PIR" id="S13743">
    <property type="entry name" value="S13743"/>
</dbReference>
<dbReference type="RefSeq" id="NP_011342.1">
    <property type="nucleotide sequence ID" value="NM_001181038.1"/>
</dbReference>
<dbReference type="PDB" id="6Q8Y">
    <property type="method" value="EM"/>
    <property type="resolution" value="3.10 A"/>
    <property type="chains" value="z=3-918"/>
</dbReference>
<dbReference type="PDBsum" id="6Q8Y"/>
<dbReference type="EMDB" id="EMD-4474"/>
<dbReference type="SMR" id="P22147"/>
<dbReference type="BioGRID" id="33080">
    <property type="interactions" value="1027"/>
</dbReference>
<dbReference type="DIP" id="DIP-656N"/>
<dbReference type="FunCoup" id="P22147">
    <property type="interactions" value="1207"/>
</dbReference>
<dbReference type="IntAct" id="P22147">
    <property type="interactions" value="164"/>
</dbReference>
<dbReference type="MINT" id="P22147"/>
<dbReference type="STRING" id="4932.YGL173C"/>
<dbReference type="GlyGen" id="P22147">
    <property type="glycosylation" value="3 sites, 1 O-linked glycan (2 sites)"/>
</dbReference>
<dbReference type="iPTMnet" id="P22147"/>
<dbReference type="PaxDb" id="4932-YGL173C"/>
<dbReference type="PeptideAtlas" id="P22147"/>
<dbReference type="EnsemblFungi" id="YGL173C_mRNA">
    <property type="protein sequence ID" value="YGL173C"/>
    <property type="gene ID" value="YGL173C"/>
</dbReference>
<dbReference type="GeneID" id="852702"/>
<dbReference type="KEGG" id="sce:YGL173C"/>
<dbReference type="AGR" id="SGD:S000003141"/>
<dbReference type="SGD" id="S000003141">
    <property type="gene designation" value="XRN1"/>
</dbReference>
<dbReference type="VEuPathDB" id="FungiDB:YGL173C"/>
<dbReference type="eggNOG" id="KOG2045">
    <property type="taxonomic scope" value="Eukaryota"/>
</dbReference>
<dbReference type="GeneTree" id="ENSGT00670000098080"/>
<dbReference type="HOGENOM" id="CLU_001581_1_2_1"/>
<dbReference type="InParanoid" id="P22147"/>
<dbReference type="OMA" id="VASWPWF"/>
<dbReference type="OrthoDB" id="372487at2759"/>
<dbReference type="BioCyc" id="YEAST:G3O-30661-MONOMER"/>
<dbReference type="BioGRID-ORCS" id="852702">
    <property type="hits" value="0 hits in 10 CRISPR screens"/>
</dbReference>
<dbReference type="PRO" id="PR:P22147"/>
<dbReference type="Proteomes" id="UP000002311">
    <property type="component" value="Chromosome VII"/>
</dbReference>
<dbReference type="RNAct" id="P22147">
    <property type="molecule type" value="protein"/>
</dbReference>
<dbReference type="GO" id="GO:0005737">
    <property type="term" value="C:cytoplasm"/>
    <property type="evidence" value="ECO:0000314"/>
    <property type="project" value="SGD"/>
</dbReference>
<dbReference type="GO" id="GO:0010494">
    <property type="term" value="C:cytoplasmic stress granule"/>
    <property type="evidence" value="ECO:0000314"/>
    <property type="project" value="SGD"/>
</dbReference>
<dbReference type="GO" id="GO:0005829">
    <property type="term" value="C:cytosol"/>
    <property type="evidence" value="ECO:0000304"/>
    <property type="project" value="Reactome"/>
</dbReference>
<dbReference type="GO" id="GO:0090512">
    <property type="term" value="C:eisosome membrane domain/MCC"/>
    <property type="evidence" value="ECO:0000314"/>
    <property type="project" value="SGD"/>
</dbReference>
<dbReference type="GO" id="GO:0005874">
    <property type="term" value="C:microtubule"/>
    <property type="evidence" value="ECO:0007669"/>
    <property type="project" value="UniProtKB-KW"/>
</dbReference>
<dbReference type="GO" id="GO:0005634">
    <property type="term" value="C:nucleus"/>
    <property type="evidence" value="ECO:0000314"/>
    <property type="project" value="SGD"/>
</dbReference>
<dbReference type="GO" id="GO:0000932">
    <property type="term" value="C:P-body"/>
    <property type="evidence" value="ECO:0000314"/>
    <property type="project" value="SGD"/>
</dbReference>
<dbReference type="GO" id="GO:0048471">
    <property type="term" value="C:perinuclear region of cytoplasm"/>
    <property type="evidence" value="ECO:0007669"/>
    <property type="project" value="UniProtKB-SubCell"/>
</dbReference>
<dbReference type="GO" id="GO:0004534">
    <property type="term" value="F:5'-3' RNA exonuclease activity"/>
    <property type="evidence" value="ECO:0000314"/>
    <property type="project" value="SGD"/>
</dbReference>
<dbReference type="GO" id="GO:0003682">
    <property type="term" value="F:chromatin binding"/>
    <property type="evidence" value="ECO:0000314"/>
    <property type="project" value="SGD"/>
</dbReference>
<dbReference type="GO" id="GO:0031370">
    <property type="term" value="F:eukaryotic initiation factor 4G binding"/>
    <property type="evidence" value="ECO:0000314"/>
    <property type="project" value="SGD"/>
</dbReference>
<dbReference type="GO" id="GO:0003729">
    <property type="term" value="F:mRNA binding"/>
    <property type="evidence" value="ECO:0007005"/>
    <property type="project" value="SGD"/>
</dbReference>
<dbReference type="GO" id="GO:0003723">
    <property type="term" value="F:RNA binding"/>
    <property type="evidence" value="ECO:0000318"/>
    <property type="project" value="GO_Central"/>
</dbReference>
<dbReference type="GO" id="GO:0006995">
    <property type="term" value="P:cellular response to nitrogen starvation"/>
    <property type="evidence" value="ECO:0000315"/>
    <property type="project" value="SGD"/>
</dbReference>
<dbReference type="GO" id="GO:0000741">
    <property type="term" value="P:karyogamy"/>
    <property type="evidence" value="ECO:0007669"/>
    <property type="project" value="UniProtKB-KW"/>
</dbReference>
<dbReference type="GO" id="GO:0061157">
    <property type="term" value="P:mRNA destabilization"/>
    <property type="evidence" value="ECO:0000315"/>
    <property type="project" value="SGD"/>
</dbReference>
<dbReference type="GO" id="GO:0110155">
    <property type="term" value="P:NAD-cap decapping"/>
    <property type="evidence" value="ECO:0000314"/>
    <property type="project" value="SGD"/>
</dbReference>
<dbReference type="GO" id="GO:0016242">
    <property type="term" value="P:negative regulation of macroautophagy"/>
    <property type="evidence" value="ECO:0000315"/>
    <property type="project" value="SGD"/>
</dbReference>
<dbReference type="GO" id="GO:0070651">
    <property type="term" value="P:nonfunctional rRNA decay"/>
    <property type="evidence" value="ECO:0000315"/>
    <property type="project" value="SGD"/>
</dbReference>
<dbReference type="GO" id="GO:0000956">
    <property type="term" value="P:nuclear-transcribed mRNA catabolic process"/>
    <property type="evidence" value="ECO:0000315"/>
    <property type="project" value="SGD"/>
</dbReference>
<dbReference type="GO" id="GO:0070479">
    <property type="term" value="P:nuclear-transcribed mRNA catabolic process, 5'-3' exonucleolytic nonsense-mediated decay"/>
    <property type="evidence" value="ECO:0000315"/>
    <property type="project" value="SGD"/>
</dbReference>
<dbReference type="GO" id="GO:0070966">
    <property type="term" value="P:nuclear-transcribed mRNA catabolic process, no-go decay"/>
    <property type="evidence" value="ECO:0000315"/>
    <property type="project" value="SGD"/>
</dbReference>
<dbReference type="GO" id="GO:0000184">
    <property type="term" value="P:nuclear-transcribed mRNA catabolic process, nonsense-mediated decay"/>
    <property type="evidence" value="ECO:0000315"/>
    <property type="project" value="SGD"/>
</dbReference>
<dbReference type="GO" id="GO:0032968">
    <property type="term" value="P:positive regulation of transcription elongation by RNA polymerase II"/>
    <property type="evidence" value="ECO:0000315"/>
    <property type="project" value="SGD"/>
</dbReference>
<dbReference type="GO" id="GO:0060261">
    <property type="term" value="P:positive regulation of transcription initiation by RNA polymerase II"/>
    <property type="evidence" value="ECO:0000315"/>
    <property type="project" value="SGD"/>
</dbReference>
<dbReference type="GO" id="GO:0032204">
    <property type="term" value="P:regulation of telomere maintenance"/>
    <property type="evidence" value="ECO:0000315"/>
    <property type="project" value="SGD"/>
</dbReference>
<dbReference type="GO" id="GO:0016075">
    <property type="term" value="P:rRNA catabolic process"/>
    <property type="evidence" value="ECO:0000318"/>
    <property type="project" value="GO_Central"/>
</dbReference>
<dbReference type="GO" id="GO:0006364">
    <property type="term" value="P:rRNA processing"/>
    <property type="evidence" value="ECO:0000315"/>
    <property type="project" value="SGD"/>
</dbReference>
<dbReference type="GO" id="GO:0043144">
    <property type="term" value="P:sno(s)RNA processing"/>
    <property type="evidence" value="ECO:0000316"/>
    <property type="project" value="SGD"/>
</dbReference>
<dbReference type="GO" id="GO:0006413">
    <property type="term" value="P:translational initiation"/>
    <property type="evidence" value="ECO:0000315"/>
    <property type="project" value="SGD"/>
</dbReference>
<dbReference type="GO" id="GO:0007089">
    <property type="term" value="P:traversing start control point of mitotic cell cycle"/>
    <property type="evidence" value="ECO:0000315"/>
    <property type="project" value="SGD"/>
</dbReference>
<dbReference type="GO" id="GO:0016078">
    <property type="term" value="P:tRNA decay"/>
    <property type="evidence" value="ECO:0000314"/>
    <property type="project" value="SGD"/>
</dbReference>
<dbReference type="CDD" id="cd18673">
    <property type="entry name" value="PIN_XRN1-2-like"/>
    <property type="match status" value="1"/>
</dbReference>
<dbReference type="FunFam" id="1.25.40.1050:FF:000001">
    <property type="entry name" value="5'-3' exoribonuclease 1"/>
    <property type="match status" value="1"/>
</dbReference>
<dbReference type="FunFam" id="2.30.30.750:FF:000002">
    <property type="entry name" value="5'-3' exoribonuclease 1"/>
    <property type="match status" value="1"/>
</dbReference>
<dbReference type="FunFam" id="3.30.1370.250:FF:000001">
    <property type="entry name" value="5'-3' exoribonuclease 1"/>
    <property type="match status" value="1"/>
</dbReference>
<dbReference type="FunFam" id="3.40.50.12390:FF:000002">
    <property type="entry name" value="5'-3' exoribonuclease 1"/>
    <property type="match status" value="1"/>
</dbReference>
<dbReference type="Gene3D" id="1.25.40.1050">
    <property type="match status" value="1"/>
</dbReference>
<dbReference type="Gene3D" id="2.170.260.40">
    <property type="match status" value="1"/>
</dbReference>
<dbReference type="Gene3D" id="2.30.30.30">
    <property type="match status" value="1"/>
</dbReference>
<dbReference type="Gene3D" id="2.30.30.750">
    <property type="match status" value="1"/>
</dbReference>
<dbReference type="Gene3D" id="3.30.1370.250">
    <property type="match status" value="1"/>
</dbReference>
<dbReference type="Gene3D" id="3.40.50.12390">
    <property type="match status" value="2"/>
</dbReference>
<dbReference type="Gene3D" id="6.10.140.950">
    <property type="match status" value="2"/>
</dbReference>
<dbReference type="InterPro" id="IPR027073">
    <property type="entry name" value="5_3_exoribonuclease"/>
</dbReference>
<dbReference type="InterPro" id="IPR016494">
    <property type="entry name" value="5_3_exoribonuclease_1"/>
</dbReference>
<dbReference type="InterPro" id="IPR014722">
    <property type="entry name" value="Rib_uL2_dom2"/>
</dbReference>
<dbReference type="InterPro" id="IPR041385">
    <property type="entry name" value="SH3_12"/>
</dbReference>
<dbReference type="InterPro" id="IPR040992">
    <property type="entry name" value="XRN1_D1"/>
</dbReference>
<dbReference type="InterPro" id="IPR047007">
    <property type="entry name" value="XRN1_D1_sf"/>
</dbReference>
<dbReference type="InterPro" id="IPR041106">
    <property type="entry name" value="XRN1_D2_D3"/>
</dbReference>
<dbReference type="InterPro" id="IPR041412">
    <property type="entry name" value="Xrn1_helical"/>
</dbReference>
<dbReference type="InterPro" id="IPR004859">
    <property type="entry name" value="Xrn1_N"/>
</dbReference>
<dbReference type="InterPro" id="IPR047008">
    <property type="entry name" value="XRN1_SH3_sf"/>
</dbReference>
<dbReference type="PANTHER" id="PTHR12341:SF7">
    <property type="entry name" value="5'-3' EXORIBONUCLEASE 1"/>
    <property type="match status" value="1"/>
</dbReference>
<dbReference type="PANTHER" id="PTHR12341">
    <property type="entry name" value="5'-&gt;3' EXORIBONUCLEASE"/>
    <property type="match status" value="1"/>
</dbReference>
<dbReference type="Pfam" id="PF18129">
    <property type="entry name" value="SH3_12"/>
    <property type="match status" value="1"/>
</dbReference>
<dbReference type="Pfam" id="PF18332">
    <property type="entry name" value="XRN1_D1"/>
    <property type="match status" value="1"/>
</dbReference>
<dbReference type="Pfam" id="PF18334">
    <property type="entry name" value="XRN1_D2_D3"/>
    <property type="match status" value="1"/>
</dbReference>
<dbReference type="Pfam" id="PF17846">
    <property type="entry name" value="XRN_M"/>
    <property type="match status" value="1"/>
</dbReference>
<dbReference type="Pfam" id="PF03159">
    <property type="entry name" value="XRN_N"/>
    <property type="match status" value="1"/>
</dbReference>
<dbReference type="PIRSF" id="PIRSF006743">
    <property type="entry name" value="Exonuclease_Xnr1"/>
    <property type="match status" value="1"/>
</dbReference>
<name>XRN1_YEAST</name>
<sequence>MGIPKFFRYISERWPMILQLIEGTQIPEFDNLYLDMNSILHNCTHGNDDDVTKRLTEEEVFAKICTYIDHLFQTIKPKKIFYMAIDGVAPRAKMNQQRARRFRTAMDAEKALKKAIENGDEIPKGEPFDSNSITPGTEFMAKLTKNLQYFIHDKISNDSKWREVQIIFSGHEVPGEGEHKIMNFIRHLKSQKDFNQNTRHCIYGLDADLIMLGLSTHGPHFALLREEVTFGRRNSEKKSLEHQNFYLLHLSLLREYMELEFKEIADEMQFEYNFERILDDFILVMFVIGNDFLPNLPDLHLNKGAFPVLLQTFKEALLHTDGYINEHGKINLKRLGVWLNYLSQFELLNFEKDDIDVEWFNKQLENISLEGERKRQRVGKKLLVKQQKKLIGSIKPWLMEQLQEKLSPDLPDEEIPTLELPKDLDMKDHLEFLKEFAFDLGLFITHSKSKGSYSLKMDLDSINPDETEEEFQNRVNSIRKTIKKYQNAIIVEDKEELETEKTIYNERFERWKHEYYHDKLKFTTDSEEKVRDLAKDYVEGLQWVLYYYYRGCPSWSWYYPHHYAPRISDLAKGLDQDIEFDLSKPFTPFQQLMAVLPERSKNLIPPAFRPLMYDEQSPIHDFYPAEVQLDKNGKTADWEAVVLISFVDEKRLIEAMQPYLRKLSPEEKTRNQFGKDLIYSFNPQVDNLYKSPLGGIFSDIEHNHCVEKEYITIPLDSSEIRYGLLPNAKLGAEMLAGFPTLLSLPFTSSLEYNETMVFQQPSKQQSMVLQITDIYKTNNVTLEDFSKRHLNKVIYTRWPYLRESKLVSLTDGKTIYEYQESNDKKKFGFITKPAETQDKKLFNSLKNSMLRMYAKQKAVKIGPMEAIATVFPVTGLVRDSDGGYIKTFSPTPDYYPLQLVVESVVNEDERYKERGPIPIEEEFPLNSKVIFLGDYAYGGETTIDGYSSDRRLKITVEKKFLDSEPTIGKERLQMDHQAVKYYPSYIVSKNMHLHPLFLSKITSKFMITDATGKHINVGIPVKFEARHQKVLGYARRNPRGWEYSNLTLNLLKEYRQTFPDFFFRLSKVGNDIPVLEDLFPDTSTKDAMNLLDGIKQWLKYVSSKFIAVSLESDSLTKTSIAAVEDHIMKYAANIEGHERKQLAKVPREAVLNPRSSFALLRSQKFDLGDRVVYIQDSGKVPIFSKGTVVGYTTLSSSLSIQVLFDHEIVAGNNFGGRLRTNRGLGLDASFLLNITNRQFIYHSKASKKALEKKKQSNNRNNNTKTAHKTPSKQQSEEKLRKERAHDLLNFIKKDTNEKNSESVDNKSMGSQKDSKPAKKVLLKRPAQKSSENVQVDLANFEKAPLDNPTVAGSIFNAVANQYSDGIGSNLNIPTPPHPMNVVGGPIPGANDVADVGLPYNIPPGFMTHPNGLHPLHPHQMPYPNMNGMSIPPPAPHGFGQPISFPPPPPMTNVSDQGSRIVVNEKESQDLKKFINGKQHSNGSTIGGETKNSRKGEIKPSSGTNSTECQSPKSQSNAADRDNKKDEST</sequence>